<keyword id="KW-1003">Cell membrane</keyword>
<keyword id="KW-0202">Cytokine</keyword>
<keyword id="KW-1015">Disulfide bond</keyword>
<keyword id="KW-0325">Glycoprotein</keyword>
<keyword id="KW-0472">Membrane</keyword>
<keyword id="KW-1185">Reference proteome</keyword>
<keyword id="KW-0964">Secreted</keyword>
<keyword id="KW-0735">Signal-anchor</keyword>
<keyword id="KW-0812">Transmembrane</keyword>
<keyword id="KW-1133">Transmembrane helix</keyword>
<proteinExistence type="evidence at transcript level"/>
<dbReference type="EMBL" id="AF086711">
    <property type="protein sequence ID" value="AAD04375.1"/>
    <property type="molecule type" value="mRNA"/>
</dbReference>
<dbReference type="EMBL" id="AY333790">
    <property type="protein sequence ID" value="AAP86654.1"/>
    <property type="molecule type" value="mRNA"/>
</dbReference>
<dbReference type="RefSeq" id="NP_001002981.1">
    <property type="nucleotide sequence ID" value="NM_001002981.1"/>
</dbReference>
<dbReference type="SMR" id="O97626"/>
<dbReference type="FunCoup" id="O97626">
    <property type="interactions" value="69"/>
</dbReference>
<dbReference type="STRING" id="9615.ENSCAFP00000027967"/>
<dbReference type="GlyCosmos" id="O97626">
    <property type="glycosylation" value="1 site, No reported glycans"/>
</dbReference>
<dbReference type="PaxDb" id="9612-ENSCAFP00000027967"/>
<dbReference type="Ensembl" id="ENSCAFT00000030091.5">
    <property type="protein sequence ID" value="ENSCAFP00000027967.3"/>
    <property type="gene ID" value="ENSCAFG00000018945.5"/>
</dbReference>
<dbReference type="Ensembl" id="ENSCAFT00030032974.1">
    <property type="protein sequence ID" value="ENSCAFP00030028766.1"/>
    <property type="gene ID" value="ENSCAFG00030017860.1"/>
</dbReference>
<dbReference type="Ensembl" id="ENSCAFT00040016529.1">
    <property type="protein sequence ID" value="ENSCAFP00040014323.1"/>
    <property type="gene ID" value="ENSCAFG00040008883.1"/>
</dbReference>
<dbReference type="Ensembl" id="ENSCAFT00845051855.1">
    <property type="protein sequence ID" value="ENSCAFP00845040687.1"/>
    <property type="gene ID" value="ENSCAFG00845029290.1"/>
</dbReference>
<dbReference type="GeneID" id="403468"/>
<dbReference type="KEGG" id="cfa:403468"/>
<dbReference type="CTD" id="959"/>
<dbReference type="VEuPathDB" id="HostDB:ENSCAFG00845029290"/>
<dbReference type="VGNC" id="VGNC:38959">
    <property type="gene designation" value="CD40LG"/>
</dbReference>
<dbReference type="eggNOG" id="KOG3656">
    <property type="taxonomic scope" value="Eukaryota"/>
</dbReference>
<dbReference type="GeneTree" id="ENSGT01130000278318"/>
<dbReference type="HOGENOM" id="CLU_093203_0_0_1"/>
<dbReference type="InParanoid" id="O97626"/>
<dbReference type="OMA" id="VSFCTKA"/>
<dbReference type="OrthoDB" id="8667946at2759"/>
<dbReference type="TreeFam" id="TF332169"/>
<dbReference type="Reactome" id="R-CFA-198933">
    <property type="pathway name" value="Immunoregulatory interactions between a Lymphoid and a non-Lymphoid cell"/>
</dbReference>
<dbReference type="Reactome" id="R-CFA-5668541">
    <property type="pathway name" value="TNFR2 non-canonical NF-kB pathway"/>
</dbReference>
<dbReference type="Reactome" id="R-CFA-5676594">
    <property type="pathway name" value="TNF receptor superfamily (TNFSF) members mediating non-canonical NF-kB pathway"/>
</dbReference>
<dbReference type="Proteomes" id="UP000002254">
    <property type="component" value="Chromosome X"/>
</dbReference>
<dbReference type="Proteomes" id="UP000694429">
    <property type="component" value="Chromosome X"/>
</dbReference>
<dbReference type="Proteomes" id="UP000694542">
    <property type="component" value="Chromosome X"/>
</dbReference>
<dbReference type="Proteomes" id="UP000805418">
    <property type="component" value="Chromosome X"/>
</dbReference>
<dbReference type="Bgee" id="ENSCAFG00000018945">
    <property type="expression patterns" value="Expressed in blood and 33 other cell types or tissues"/>
</dbReference>
<dbReference type="GO" id="GO:0009986">
    <property type="term" value="C:cell surface"/>
    <property type="evidence" value="ECO:0000250"/>
    <property type="project" value="UniProtKB"/>
</dbReference>
<dbReference type="GO" id="GO:0009897">
    <property type="term" value="C:external side of plasma membrane"/>
    <property type="evidence" value="ECO:0007669"/>
    <property type="project" value="Ensembl"/>
</dbReference>
<dbReference type="GO" id="GO:0005615">
    <property type="term" value="C:extracellular space"/>
    <property type="evidence" value="ECO:0000318"/>
    <property type="project" value="GO_Central"/>
</dbReference>
<dbReference type="GO" id="GO:0005794">
    <property type="term" value="C:Golgi apparatus"/>
    <property type="evidence" value="ECO:0007669"/>
    <property type="project" value="Ensembl"/>
</dbReference>
<dbReference type="GO" id="GO:0005174">
    <property type="term" value="F:CD40 receptor binding"/>
    <property type="evidence" value="ECO:0000250"/>
    <property type="project" value="UniProtKB"/>
</dbReference>
<dbReference type="GO" id="GO:0005125">
    <property type="term" value="F:cytokine activity"/>
    <property type="evidence" value="ECO:0000318"/>
    <property type="project" value="GO_Central"/>
</dbReference>
<dbReference type="GO" id="GO:0005178">
    <property type="term" value="F:integrin binding"/>
    <property type="evidence" value="ECO:0007669"/>
    <property type="project" value="Ensembl"/>
</dbReference>
<dbReference type="GO" id="GO:0043539">
    <property type="term" value="F:protein serine/threonine kinase activator activity"/>
    <property type="evidence" value="ECO:0000250"/>
    <property type="project" value="UniProtKB"/>
</dbReference>
<dbReference type="GO" id="GO:0005164">
    <property type="term" value="F:tumor necrosis factor receptor binding"/>
    <property type="evidence" value="ECO:0007669"/>
    <property type="project" value="InterPro"/>
</dbReference>
<dbReference type="GO" id="GO:0030183">
    <property type="term" value="P:B cell differentiation"/>
    <property type="evidence" value="ECO:0007669"/>
    <property type="project" value="Ensembl"/>
</dbReference>
<dbReference type="GO" id="GO:0042100">
    <property type="term" value="P:B cell proliferation"/>
    <property type="evidence" value="ECO:0000250"/>
    <property type="project" value="UniProtKB"/>
</dbReference>
<dbReference type="GO" id="GO:0023035">
    <property type="term" value="P:CD40 signaling pathway"/>
    <property type="evidence" value="ECO:0007669"/>
    <property type="project" value="Ensembl"/>
</dbReference>
<dbReference type="GO" id="GO:0007166">
    <property type="term" value="P:cell surface receptor signaling pathway"/>
    <property type="evidence" value="ECO:0000318"/>
    <property type="project" value="GO_Central"/>
</dbReference>
<dbReference type="GO" id="GO:0006954">
    <property type="term" value="P:inflammatory response"/>
    <property type="evidence" value="ECO:0000250"/>
    <property type="project" value="UniProtKB"/>
</dbReference>
<dbReference type="GO" id="GO:0007229">
    <property type="term" value="P:integrin-mediated signaling pathway"/>
    <property type="evidence" value="ECO:0007669"/>
    <property type="project" value="Ensembl"/>
</dbReference>
<dbReference type="GO" id="GO:0045190">
    <property type="term" value="P:isotype switching"/>
    <property type="evidence" value="ECO:0007669"/>
    <property type="project" value="Ensembl"/>
</dbReference>
<dbReference type="GO" id="GO:0043066">
    <property type="term" value="P:negative regulation of apoptotic process"/>
    <property type="evidence" value="ECO:0007669"/>
    <property type="project" value="Ensembl"/>
</dbReference>
<dbReference type="GO" id="GO:0030168">
    <property type="term" value="P:platelet activation"/>
    <property type="evidence" value="ECO:0000250"/>
    <property type="project" value="UniProtKB"/>
</dbReference>
<dbReference type="GO" id="GO:0043123">
    <property type="term" value="P:positive regulation of canonical NF-kappaB signal transduction"/>
    <property type="evidence" value="ECO:0000318"/>
    <property type="project" value="GO_Central"/>
</dbReference>
<dbReference type="GO" id="GO:2000353">
    <property type="term" value="P:positive regulation of endothelial cell apoptotic process"/>
    <property type="evidence" value="ECO:0007669"/>
    <property type="project" value="Ensembl"/>
</dbReference>
<dbReference type="GO" id="GO:2001238">
    <property type="term" value="P:positive regulation of extrinsic apoptotic signaling pathway"/>
    <property type="evidence" value="ECO:0000318"/>
    <property type="project" value="GO_Central"/>
</dbReference>
<dbReference type="GO" id="GO:0032733">
    <property type="term" value="P:positive regulation of interleukin-10 production"/>
    <property type="evidence" value="ECO:0000250"/>
    <property type="project" value="UniProtKB"/>
</dbReference>
<dbReference type="GO" id="GO:0032735">
    <property type="term" value="P:positive regulation of interleukin-12 production"/>
    <property type="evidence" value="ECO:0007669"/>
    <property type="project" value="Ensembl"/>
</dbReference>
<dbReference type="GO" id="GO:0032753">
    <property type="term" value="P:positive regulation of interleukin-4 production"/>
    <property type="evidence" value="ECO:0000250"/>
    <property type="project" value="UniProtKB"/>
</dbReference>
<dbReference type="GO" id="GO:0051092">
    <property type="term" value="P:positive regulation of NF-kappaB transcription factor activity"/>
    <property type="evidence" value="ECO:0000250"/>
    <property type="project" value="UniProtKB"/>
</dbReference>
<dbReference type="GO" id="GO:0042102">
    <property type="term" value="P:positive regulation of T cell proliferation"/>
    <property type="evidence" value="ECO:0000250"/>
    <property type="project" value="UniProtKB"/>
</dbReference>
<dbReference type="GO" id="GO:0002637">
    <property type="term" value="P:regulation of immunoglobulin production"/>
    <property type="evidence" value="ECO:0007669"/>
    <property type="project" value="Ensembl"/>
</dbReference>
<dbReference type="CDD" id="cd00184">
    <property type="entry name" value="TNF"/>
    <property type="match status" value="1"/>
</dbReference>
<dbReference type="FunFam" id="2.60.120.40:FF:000013">
    <property type="entry name" value="CD40 ligand"/>
    <property type="match status" value="1"/>
</dbReference>
<dbReference type="Gene3D" id="2.60.120.40">
    <property type="match status" value="1"/>
</dbReference>
<dbReference type="InterPro" id="IPR003263">
    <property type="entry name" value="CD40L"/>
</dbReference>
<dbReference type="InterPro" id="IPR021184">
    <property type="entry name" value="TNF_CS"/>
</dbReference>
<dbReference type="InterPro" id="IPR006052">
    <property type="entry name" value="TNF_dom"/>
</dbReference>
<dbReference type="InterPro" id="IPR008983">
    <property type="entry name" value="Tumour_necrosis_fac-like_dom"/>
</dbReference>
<dbReference type="PANTHER" id="PTHR11471:SF5">
    <property type="entry name" value="CD40 LIGAND"/>
    <property type="match status" value="1"/>
</dbReference>
<dbReference type="PANTHER" id="PTHR11471">
    <property type="entry name" value="TUMOR NECROSIS FACTOR FAMILY MEMBER"/>
    <property type="match status" value="1"/>
</dbReference>
<dbReference type="Pfam" id="PF00229">
    <property type="entry name" value="TNF"/>
    <property type="match status" value="1"/>
</dbReference>
<dbReference type="PIRSF" id="PIRSF016527">
    <property type="entry name" value="TNF_5"/>
    <property type="match status" value="1"/>
</dbReference>
<dbReference type="PRINTS" id="PR01702">
    <property type="entry name" value="CD40LIGAND"/>
</dbReference>
<dbReference type="SMART" id="SM00207">
    <property type="entry name" value="TNF"/>
    <property type="match status" value="1"/>
</dbReference>
<dbReference type="SUPFAM" id="SSF49842">
    <property type="entry name" value="TNF-like"/>
    <property type="match status" value="1"/>
</dbReference>
<dbReference type="PROSITE" id="PS00251">
    <property type="entry name" value="THD_1"/>
    <property type="match status" value="1"/>
</dbReference>
<dbReference type="PROSITE" id="PS50049">
    <property type="entry name" value="THD_2"/>
    <property type="match status" value="1"/>
</dbReference>
<name>CD40L_CANLF</name>
<organism>
    <name type="scientific">Canis lupus familiaris</name>
    <name type="common">Dog</name>
    <name type="synonym">Canis familiaris</name>
    <dbReference type="NCBI Taxonomy" id="9615"/>
    <lineage>
        <taxon>Eukaryota</taxon>
        <taxon>Metazoa</taxon>
        <taxon>Chordata</taxon>
        <taxon>Craniata</taxon>
        <taxon>Vertebrata</taxon>
        <taxon>Euteleostomi</taxon>
        <taxon>Mammalia</taxon>
        <taxon>Eutheria</taxon>
        <taxon>Laurasiatheria</taxon>
        <taxon>Carnivora</taxon>
        <taxon>Caniformia</taxon>
        <taxon>Canidae</taxon>
        <taxon>Canis</taxon>
    </lineage>
</organism>
<gene>
    <name type="primary">CD40LG</name>
    <name type="synonym">CD40L</name>
    <name type="synonym">TNFSF5</name>
</gene>
<reference key="1">
    <citation type="submission" date="1998-08" db="EMBL/GenBank/DDBJ databases">
        <title>Adjuvant properties of canine CD40L.</title>
        <authorList>
            <person name="Hosie M.H."/>
            <person name="Willett B.J."/>
        </authorList>
    </citation>
    <scope>NUCLEOTIDE SEQUENCE [MRNA]</scope>
</reference>
<reference key="2">
    <citation type="submission" date="2003-07" db="EMBL/GenBank/DDBJ databases">
        <title>Canine CD40 and CD40 ligand cDNA sequences.</title>
        <authorList>
            <person name="Yang S."/>
            <person name="Sim G.-K."/>
        </authorList>
    </citation>
    <scope>NUCLEOTIDE SEQUENCE [MRNA]</scope>
</reference>
<protein>
    <recommendedName>
        <fullName>CD40 ligand</fullName>
        <shortName>CD40-L</shortName>
    </recommendedName>
    <alternativeName>
        <fullName>Tumor necrosis factor ligand superfamily member 5</fullName>
    </alternativeName>
    <cdAntigenName>CD154</cdAntigenName>
    <component>
        <recommendedName>
            <fullName>CD40 ligand, membrane form</fullName>
        </recommendedName>
    </component>
    <component>
        <recommendedName>
            <fullName evidence="3">CD40 ligand, soluble form</fullName>
            <shortName evidence="3">sCD40L</shortName>
        </recommendedName>
    </component>
</protein>
<evidence type="ECO:0000250" key="1"/>
<evidence type="ECO:0000250" key="2">
    <source>
        <dbReference type="UniProtKB" id="P27548"/>
    </source>
</evidence>
<evidence type="ECO:0000250" key="3">
    <source>
        <dbReference type="UniProtKB" id="P29965"/>
    </source>
</evidence>
<evidence type="ECO:0000255" key="4"/>
<evidence type="ECO:0000255" key="5">
    <source>
        <dbReference type="PROSITE-ProRule" id="PRU01387"/>
    </source>
</evidence>
<evidence type="ECO:0000305" key="6"/>
<feature type="chain" id="PRO_0000034478" description="CD40 ligand, membrane form">
    <location>
        <begin position="1"/>
        <end position="260"/>
    </location>
</feature>
<feature type="chain" id="PRO_0000034479" description="CD40 ligand, soluble form" evidence="3">
    <location>
        <begin position="112"/>
        <end position="260"/>
    </location>
</feature>
<feature type="topological domain" description="Cytoplasmic" evidence="4">
    <location>
        <begin position="1"/>
        <end position="22"/>
    </location>
</feature>
<feature type="transmembrane region" description="Helical; Signal-anchor for type II membrane protein" evidence="4">
    <location>
        <begin position="23"/>
        <end position="46"/>
    </location>
</feature>
<feature type="topological domain" description="Extracellular" evidence="4">
    <location>
        <begin position="47"/>
        <end position="260"/>
    </location>
</feature>
<feature type="domain" description="THD" evidence="5">
    <location>
        <begin position="121"/>
        <end position="260"/>
    </location>
</feature>
<feature type="site" description="Cleavage" evidence="1">
    <location>
        <begin position="111"/>
        <end position="112"/>
    </location>
</feature>
<feature type="glycosylation site" description="N-linked (GlcNAc...) asparagine" evidence="4">
    <location>
        <position position="239"/>
    </location>
</feature>
<feature type="disulfide bond" evidence="5">
    <location>
        <begin position="177"/>
        <end position="217"/>
    </location>
</feature>
<accession>O97626</accession>
<sequence length="260" mass="28688">MIETYSQTAPRSVATGPPVSMKIFMYLLTVFLITQMIGSALFAVYLHRRLDKIEDERNLYEDFVFMKTLQKCNKGEGSLSLLNCEEIKSQFEAFLKEIMLNNEMKKEENIAMQKGDQDPRIAAHVISEASSNPASVLRWAPKGYYTISSNLVSLENGKQLAVKRQGLYYVYAQVTFCSNRAASSQAPFVASLCLHSPSGTERVLLRAASSRGSSKPCGQQSIHLGGVFELHPGASVFVNVTDPSQVSHGTGFTSFGLLKL</sequence>
<comment type="function">
    <text evidence="2 3">Cytokine that acts as a ligand to CD40/TNFRSF5 (By similarity). Costimulates T-cell proliferation and cytokine production (By similarity). Its cross-linking on T-cells generates a costimulatory signal which enhances the production of IL4 and IL10 in conjunction with the TCR/CD3 ligation and CD28 costimulation (By similarity). Induces the activation of NF-kappa-B (By similarity). Induces the activation of kinases MAPK8 and PAK2 in T-cells (By similarity). Mediates B-cell proliferation in the absence of co-stimulus as well as IgE production in the presence of IL4 (By similarity). Involved in immunoglobulin class switching (By similarity).</text>
</comment>
<comment type="function">
    <molecule>CD40 ligand, soluble form</molecule>
    <text evidence="3">Acts as a ligand for integrins, specifically ITGA5:ITGB1 and ITGAV:ITGB3; both integrins and the CD40 receptor are required for activation of CD40-CD40LG signaling, which have cell-type dependent effects, such as B-cell activation, NF-kappa-B signaling and anti-apoptotic signaling.</text>
</comment>
<comment type="subunit">
    <text evidence="3">Homotrimer (By similarity). Interacts with CD28 (By similarity). CD40 ligand, soluble form: Exists as either a monomer or a homotrimer (By similarity). Forms a ternary complex between CD40 and integrins for CD40-CD40LG signaling (By similarity).</text>
</comment>
<comment type="subcellular location">
    <subcellularLocation>
        <location evidence="3">Cell membrane</location>
        <topology evidence="3">Single-pass type II membrane protein</topology>
    </subcellularLocation>
    <subcellularLocation>
        <location evidence="3">Cell surface</location>
    </subcellularLocation>
</comment>
<comment type="subcellular location">
    <molecule>CD40 ligand, soluble form</molecule>
    <subcellularLocation>
        <location evidence="3">Secreted</location>
    </subcellularLocation>
    <text evidence="3">Release of soluble CD40L from platelets is partially regulated by GP IIb/IIIa, actin polymerization, and a matrix metalloproteinases (MMP) inhibitor-sensitive pathway.</text>
</comment>
<comment type="PTM">
    <text evidence="3">The soluble form derives from the membrane form by proteolytic processing.</text>
</comment>
<comment type="similarity">
    <text evidence="6">Belongs to the tumor necrosis factor family.</text>
</comment>